<comment type="function">
    <text evidence="1">Catalyzes the condensation of carbamoyl phosphate and aspartate to form carbamoyl aspartate and inorganic phosphate, the committed step in the de novo pyrimidine nucleotide biosynthesis pathway.</text>
</comment>
<comment type="catalytic activity">
    <reaction evidence="1">
        <text>carbamoyl phosphate + L-aspartate = N-carbamoyl-L-aspartate + phosphate + H(+)</text>
        <dbReference type="Rhea" id="RHEA:20013"/>
        <dbReference type="ChEBI" id="CHEBI:15378"/>
        <dbReference type="ChEBI" id="CHEBI:29991"/>
        <dbReference type="ChEBI" id="CHEBI:32814"/>
        <dbReference type="ChEBI" id="CHEBI:43474"/>
        <dbReference type="ChEBI" id="CHEBI:58228"/>
        <dbReference type="EC" id="2.1.3.2"/>
    </reaction>
</comment>
<comment type="pathway">
    <text evidence="1">Pyrimidine metabolism; UMP biosynthesis via de novo pathway; (S)-dihydroorotate from bicarbonate: step 2/3.</text>
</comment>
<comment type="subunit">
    <text evidence="1">Heterododecamer (2C3:3R2) of six catalytic PyrB chains organized as two trimers (C3), and six regulatory PyrI chains organized as three dimers (R2).</text>
</comment>
<comment type="similarity">
    <text evidence="1">Belongs to the aspartate/ornithine carbamoyltransferase superfamily. ATCase family.</text>
</comment>
<feature type="chain" id="PRO_1000088778" description="Aspartate carbamoyltransferase catalytic subunit">
    <location>
        <begin position="1"/>
        <end position="317"/>
    </location>
</feature>
<feature type="binding site" evidence="1">
    <location>
        <position position="55"/>
    </location>
    <ligand>
        <name>carbamoyl phosphate</name>
        <dbReference type="ChEBI" id="CHEBI:58228"/>
    </ligand>
</feature>
<feature type="binding site" evidence="1">
    <location>
        <position position="56"/>
    </location>
    <ligand>
        <name>carbamoyl phosphate</name>
        <dbReference type="ChEBI" id="CHEBI:58228"/>
    </ligand>
</feature>
<feature type="binding site" evidence="1">
    <location>
        <position position="83"/>
    </location>
    <ligand>
        <name>L-aspartate</name>
        <dbReference type="ChEBI" id="CHEBI:29991"/>
    </ligand>
</feature>
<feature type="binding site" evidence="1">
    <location>
        <position position="105"/>
    </location>
    <ligand>
        <name>carbamoyl phosphate</name>
        <dbReference type="ChEBI" id="CHEBI:58228"/>
    </ligand>
</feature>
<feature type="binding site" evidence="1">
    <location>
        <position position="138"/>
    </location>
    <ligand>
        <name>carbamoyl phosphate</name>
        <dbReference type="ChEBI" id="CHEBI:58228"/>
    </ligand>
</feature>
<feature type="binding site" evidence="1">
    <location>
        <position position="141"/>
    </location>
    <ligand>
        <name>carbamoyl phosphate</name>
        <dbReference type="ChEBI" id="CHEBI:58228"/>
    </ligand>
</feature>
<feature type="binding site" evidence="1">
    <location>
        <position position="171"/>
    </location>
    <ligand>
        <name>L-aspartate</name>
        <dbReference type="ChEBI" id="CHEBI:29991"/>
    </ligand>
</feature>
<feature type="binding site" evidence="1">
    <location>
        <position position="225"/>
    </location>
    <ligand>
        <name>L-aspartate</name>
        <dbReference type="ChEBI" id="CHEBI:29991"/>
    </ligand>
</feature>
<feature type="binding site" evidence="1">
    <location>
        <position position="266"/>
    </location>
    <ligand>
        <name>carbamoyl phosphate</name>
        <dbReference type="ChEBI" id="CHEBI:58228"/>
    </ligand>
</feature>
<feature type="binding site" evidence="1">
    <location>
        <position position="267"/>
    </location>
    <ligand>
        <name>carbamoyl phosphate</name>
        <dbReference type="ChEBI" id="CHEBI:58228"/>
    </ligand>
</feature>
<dbReference type="EC" id="2.1.3.2" evidence="1"/>
<dbReference type="EMBL" id="CU458896">
    <property type="protein sequence ID" value="CAM62910.1"/>
    <property type="molecule type" value="Genomic_DNA"/>
</dbReference>
<dbReference type="RefSeq" id="WP_005057676.1">
    <property type="nucleotide sequence ID" value="NZ_MLCG01000003.1"/>
</dbReference>
<dbReference type="SMR" id="B1MCD9"/>
<dbReference type="GeneID" id="93379762"/>
<dbReference type="KEGG" id="mab:MAB_2831c"/>
<dbReference type="UniPathway" id="UPA00070">
    <property type="reaction ID" value="UER00116"/>
</dbReference>
<dbReference type="Proteomes" id="UP000007137">
    <property type="component" value="Chromosome"/>
</dbReference>
<dbReference type="GO" id="GO:0005829">
    <property type="term" value="C:cytosol"/>
    <property type="evidence" value="ECO:0007669"/>
    <property type="project" value="TreeGrafter"/>
</dbReference>
<dbReference type="GO" id="GO:0016597">
    <property type="term" value="F:amino acid binding"/>
    <property type="evidence" value="ECO:0007669"/>
    <property type="project" value="InterPro"/>
</dbReference>
<dbReference type="GO" id="GO:0004070">
    <property type="term" value="F:aspartate carbamoyltransferase activity"/>
    <property type="evidence" value="ECO:0007669"/>
    <property type="project" value="UniProtKB-UniRule"/>
</dbReference>
<dbReference type="GO" id="GO:0006207">
    <property type="term" value="P:'de novo' pyrimidine nucleobase biosynthetic process"/>
    <property type="evidence" value="ECO:0007669"/>
    <property type="project" value="InterPro"/>
</dbReference>
<dbReference type="GO" id="GO:0044205">
    <property type="term" value="P:'de novo' UMP biosynthetic process"/>
    <property type="evidence" value="ECO:0007669"/>
    <property type="project" value="UniProtKB-UniRule"/>
</dbReference>
<dbReference type="GO" id="GO:0006520">
    <property type="term" value="P:amino acid metabolic process"/>
    <property type="evidence" value="ECO:0007669"/>
    <property type="project" value="InterPro"/>
</dbReference>
<dbReference type="FunFam" id="3.40.50.1370:FF:000007">
    <property type="entry name" value="Aspartate carbamoyltransferase"/>
    <property type="match status" value="1"/>
</dbReference>
<dbReference type="Gene3D" id="3.40.50.1370">
    <property type="entry name" value="Aspartate/ornithine carbamoyltransferase"/>
    <property type="match status" value="2"/>
</dbReference>
<dbReference type="HAMAP" id="MF_00001">
    <property type="entry name" value="Asp_carb_tr"/>
    <property type="match status" value="1"/>
</dbReference>
<dbReference type="InterPro" id="IPR006132">
    <property type="entry name" value="Asp/Orn_carbamoyltranf_P-bd"/>
</dbReference>
<dbReference type="InterPro" id="IPR006130">
    <property type="entry name" value="Asp/Orn_carbamoylTrfase"/>
</dbReference>
<dbReference type="InterPro" id="IPR036901">
    <property type="entry name" value="Asp/Orn_carbamoylTrfase_sf"/>
</dbReference>
<dbReference type="InterPro" id="IPR002082">
    <property type="entry name" value="Asp_carbamoyltransf"/>
</dbReference>
<dbReference type="InterPro" id="IPR006131">
    <property type="entry name" value="Asp_carbamoyltransf_Asp/Orn-bd"/>
</dbReference>
<dbReference type="NCBIfam" id="TIGR00670">
    <property type="entry name" value="asp_carb_tr"/>
    <property type="match status" value="1"/>
</dbReference>
<dbReference type="NCBIfam" id="NF002032">
    <property type="entry name" value="PRK00856.1"/>
    <property type="match status" value="1"/>
</dbReference>
<dbReference type="PANTHER" id="PTHR45753:SF6">
    <property type="entry name" value="ASPARTATE CARBAMOYLTRANSFERASE"/>
    <property type="match status" value="1"/>
</dbReference>
<dbReference type="PANTHER" id="PTHR45753">
    <property type="entry name" value="ORNITHINE CARBAMOYLTRANSFERASE, MITOCHONDRIAL"/>
    <property type="match status" value="1"/>
</dbReference>
<dbReference type="Pfam" id="PF00185">
    <property type="entry name" value="OTCace"/>
    <property type="match status" value="1"/>
</dbReference>
<dbReference type="Pfam" id="PF02729">
    <property type="entry name" value="OTCace_N"/>
    <property type="match status" value="1"/>
</dbReference>
<dbReference type="PRINTS" id="PR00100">
    <property type="entry name" value="AOTCASE"/>
</dbReference>
<dbReference type="PRINTS" id="PR00101">
    <property type="entry name" value="ATCASE"/>
</dbReference>
<dbReference type="SUPFAM" id="SSF53671">
    <property type="entry name" value="Aspartate/ornithine carbamoyltransferase"/>
    <property type="match status" value="1"/>
</dbReference>
<dbReference type="PROSITE" id="PS00097">
    <property type="entry name" value="CARBAMOYLTRANSFERASE"/>
    <property type="match status" value="1"/>
</dbReference>
<reference key="1">
    <citation type="journal article" date="2009" name="PLoS ONE">
        <title>Non mycobacterial virulence genes in the genome of the emerging pathogen Mycobacterium abscessus.</title>
        <authorList>
            <person name="Ripoll F."/>
            <person name="Pasek S."/>
            <person name="Schenowitz C."/>
            <person name="Dossat C."/>
            <person name="Barbe V."/>
            <person name="Rottman M."/>
            <person name="Macheras E."/>
            <person name="Heym B."/>
            <person name="Herrmann J.L."/>
            <person name="Daffe M."/>
            <person name="Brosch R."/>
            <person name="Risler J.L."/>
            <person name="Gaillard J.L."/>
        </authorList>
    </citation>
    <scope>NUCLEOTIDE SEQUENCE [LARGE SCALE GENOMIC DNA]</scope>
    <source>
        <strain>ATCC 19977 / DSM 44196 / CCUG 20993 / CIP 104536 / JCM 13569 / NCTC 13031 / TMC 1543 / L948</strain>
    </source>
</reference>
<organism>
    <name type="scientific">Mycobacteroides abscessus (strain ATCC 19977 / DSM 44196 / CCUG 20993 / CIP 104536 / JCM 13569 / NCTC 13031 / TMC 1543 / L948)</name>
    <name type="common">Mycobacterium abscessus</name>
    <dbReference type="NCBI Taxonomy" id="561007"/>
    <lineage>
        <taxon>Bacteria</taxon>
        <taxon>Bacillati</taxon>
        <taxon>Actinomycetota</taxon>
        <taxon>Actinomycetes</taxon>
        <taxon>Mycobacteriales</taxon>
        <taxon>Mycobacteriaceae</taxon>
        <taxon>Mycobacteroides</taxon>
        <taxon>Mycobacteroides abscessus</taxon>
    </lineage>
</organism>
<keyword id="KW-0665">Pyrimidine biosynthesis</keyword>
<keyword id="KW-1185">Reference proteome</keyword>
<keyword id="KW-0808">Transferase</keyword>
<sequence length="317" mass="33651">MRHLLSAADLTRDEATAILDDADRFLQALAGREVKKLPTLRGRTIITMFYENSTRTRVSFEVAGKWMSADVINVSASGSSVAKGESLRDTALTLRAIGADALIVRHPASGVAAQLAQWTAEGEGGPAVVNAGDGTHEHPTQALLDALTIRQRLGSLEGRRVVIVGDILHSRVARSNALLLNTFGAEVVLVAPPTLLPVGVGTWPVTVTHDLDAELPGADAVLMLRVQAERMTGGFFPSAREYSVLYGMSEARQRLLPEHAVVLHPGPMLRGMEIASAVADSSQSGVLQQVSNGVHIRMAVLFHLLVGSSDSPEAVPA</sequence>
<name>PYRB_MYCA9</name>
<evidence type="ECO:0000255" key="1">
    <source>
        <dbReference type="HAMAP-Rule" id="MF_00001"/>
    </source>
</evidence>
<gene>
    <name evidence="1" type="primary">pyrB</name>
    <name type="ordered locus">MAB_2831c</name>
</gene>
<accession>B1MCD9</accession>
<proteinExistence type="inferred from homology"/>
<protein>
    <recommendedName>
        <fullName evidence="1">Aspartate carbamoyltransferase catalytic subunit</fullName>
        <ecNumber evidence="1">2.1.3.2</ecNumber>
    </recommendedName>
    <alternativeName>
        <fullName evidence="1">Aspartate transcarbamylase</fullName>
        <shortName evidence="1">ATCase</shortName>
    </alternativeName>
</protein>